<gene>
    <name evidence="1" type="primary">fabZ</name>
    <name type="ordered locus">SynRCC307_1817</name>
</gene>
<feature type="chain" id="PRO_0000340810" description="3-hydroxyacyl-[acyl-carrier-protein] dehydratase FabZ">
    <location>
        <begin position="1"/>
        <end position="152"/>
    </location>
</feature>
<feature type="active site" evidence="1">
    <location>
        <position position="58"/>
    </location>
</feature>
<dbReference type="EC" id="4.2.1.59" evidence="1"/>
<dbReference type="EMBL" id="CT978603">
    <property type="protein sequence ID" value="CAK28720.1"/>
    <property type="molecule type" value="Genomic_DNA"/>
</dbReference>
<dbReference type="SMR" id="A5GV11"/>
<dbReference type="STRING" id="316278.SynRCC307_1817"/>
<dbReference type="KEGG" id="syr:SynRCC307_1817"/>
<dbReference type="eggNOG" id="COG0764">
    <property type="taxonomic scope" value="Bacteria"/>
</dbReference>
<dbReference type="HOGENOM" id="CLU_078912_3_0_3"/>
<dbReference type="Proteomes" id="UP000001115">
    <property type="component" value="Chromosome"/>
</dbReference>
<dbReference type="GO" id="GO:0005737">
    <property type="term" value="C:cytoplasm"/>
    <property type="evidence" value="ECO:0007669"/>
    <property type="project" value="UniProtKB-SubCell"/>
</dbReference>
<dbReference type="GO" id="GO:0016020">
    <property type="term" value="C:membrane"/>
    <property type="evidence" value="ECO:0007669"/>
    <property type="project" value="GOC"/>
</dbReference>
<dbReference type="GO" id="GO:0019171">
    <property type="term" value="F:(3R)-hydroxyacyl-[acyl-carrier-protein] dehydratase activity"/>
    <property type="evidence" value="ECO:0007669"/>
    <property type="project" value="UniProtKB-EC"/>
</dbReference>
<dbReference type="GO" id="GO:0006633">
    <property type="term" value="P:fatty acid biosynthetic process"/>
    <property type="evidence" value="ECO:0007669"/>
    <property type="project" value="UniProtKB-UniRule"/>
</dbReference>
<dbReference type="GO" id="GO:0009245">
    <property type="term" value="P:lipid A biosynthetic process"/>
    <property type="evidence" value="ECO:0007669"/>
    <property type="project" value="UniProtKB-UniRule"/>
</dbReference>
<dbReference type="CDD" id="cd01288">
    <property type="entry name" value="FabZ"/>
    <property type="match status" value="1"/>
</dbReference>
<dbReference type="FunFam" id="3.10.129.10:FF:000001">
    <property type="entry name" value="3-hydroxyacyl-[acyl-carrier-protein] dehydratase FabZ"/>
    <property type="match status" value="1"/>
</dbReference>
<dbReference type="Gene3D" id="3.10.129.10">
    <property type="entry name" value="Hotdog Thioesterase"/>
    <property type="match status" value="1"/>
</dbReference>
<dbReference type="HAMAP" id="MF_00406">
    <property type="entry name" value="FabZ"/>
    <property type="match status" value="1"/>
</dbReference>
<dbReference type="InterPro" id="IPR013114">
    <property type="entry name" value="FabA_FabZ"/>
</dbReference>
<dbReference type="InterPro" id="IPR010084">
    <property type="entry name" value="FabZ"/>
</dbReference>
<dbReference type="InterPro" id="IPR029069">
    <property type="entry name" value="HotDog_dom_sf"/>
</dbReference>
<dbReference type="NCBIfam" id="TIGR01750">
    <property type="entry name" value="fabZ"/>
    <property type="match status" value="1"/>
</dbReference>
<dbReference type="NCBIfam" id="NF000582">
    <property type="entry name" value="PRK00006.1"/>
    <property type="match status" value="1"/>
</dbReference>
<dbReference type="PANTHER" id="PTHR30272">
    <property type="entry name" value="3-HYDROXYACYL-[ACYL-CARRIER-PROTEIN] DEHYDRATASE"/>
    <property type="match status" value="1"/>
</dbReference>
<dbReference type="PANTHER" id="PTHR30272:SF1">
    <property type="entry name" value="3-HYDROXYACYL-[ACYL-CARRIER-PROTEIN] DEHYDRATASE"/>
    <property type="match status" value="1"/>
</dbReference>
<dbReference type="Pfam" id="PF07977">
    <property type="entry name" value="FabA"/>
    <property type="match status" value="1"/>
</dbReference>
<dbReference type="SUPFAM" id="SSF54637">
    <property type="entry name" value="Thioesterase/thiol ester dehydrase-isomerase"/>
    <property type="match status" value="1"/>
</dbReference>
<proteinExistence type="inferred from homology"/>
<organism>
    <name type="scientific">Synechococcus sp. (strain RCC307)</name>
    <dbReference type="NCBI Taxonomy" id="316278"/>
    <lineage>
        <taxon>Bacteria</taxon>
        <taxon>Bacillati</taxon>
        <taxon>Cyanobacteriota</taxon>
        <taxon>Cyanophyceae</taxon>
        <taxon>Synechococcales</taxon>
        <taxon>Synechococcaceae</taxon>
        <taxon>Synechococcus</taxon>
    </lineage>
</organism>
<name>FABZ_SYNR3</name>
<sequence>MSASSTAHSPLMSSEQIMNLLPHRYPFALVDRVLEHEPGKRAVAIKNITLNEPQFQGHFPGRPLMPGVLIVEAMAQVGGLIVTQMPDLPKGLFVFAGIDGVRFRRPVVPGDQLRITCELLSLKRQRFGKVRAQATVDGELVCSGELMFSLVD</sequence>
<evidence type="ECO:0000255" key="1">
    <source>
        <dbReference type="HAMAP-Rule" id="MF_00406"/>
    </source>
</evidence>
<reference key="1">
    <citation type="submission" date="2006-05" db="EMBL/GenBank/DDBJ databases">
        <authorList>
            <consortium name="Genoscope"/>
        </authorList>
    </citation>
    <scope>NUCLEOTIDE SEQUENCE [LARGE SCALE GENOMIC DNA]</scope>
    <source>
        <strain>RCC307</strain>
    </source>
</reference>
<accession>A5GV11</accession>
<keyword id="KW-0963">Cytoplasm</keyword>
<keyword id="KW-0441">Lipid A biosynthesis</keyword>
<keyword id="KW-0444">Lipid biosynthesis</keyword>
<keyword id="KW-0443">Lipid metabolism</keyword>
<keyword id="KW-0456">Lyase</keyword>
<keyword id="KW-1185">Reference proteome</keyword>
<comment type="function">
    <text evidence="1">Involved in unsaturated fatty acids biosynthesis. Catalyzes the dehydration of short chain beta-hydroxyacyl-ACPs and long chain saturated and unsaturated beta-hydroxyacyl-ACPs.</text>
</comment>
<comment type="catalytic activity">
    <reaction evidence="1">
        <text>a (3R)-hydroxyacyl-[ACP] = a (2E)-enoyl-[ACP] + H2O</text>
        <dbReference type="Rhea" id="RHEA:13097"/>
        <dbReference type="Rhea" id="RHEA-COMP:9925"/>
        <dbReference type="Rhea" id="RHEA-COMP:9945"/>
        <dbReference type="ChEBI" id="CHEBI:15377"/>
        <dbReference type="ChEBI" id="CHEBI:78784"/>
        <dbReference type="ChEBI" id="CHEBI:78827"/>
        <dbReference type="EC" id="4.2.1.59"/>
    </reaction>
</comment>
<comment type="subcellular location">
    <subcellularLocation>
        <location evidence="1">Cytoplasm</location>
    </subcellularLocation>
</comment>
<comment type="similarity">
    <text evidence="1">Belongs to the thioester dehydratase family. FabZ subfamily.</text>
</comment>
<protein>
    <recommendedName>
        <fullName evidence="1">3-hydroxyacyl-[acyl-carrier-protein] dehydratase FabZ</fullName>
        <ecNumber evidence="1">4.2.1.59</ecNumber>
    </recommendedName>
    <alternativeName>
        <fullName evidence="1">(3R)-hydroxymyristoyl-[acyl-carrier-protein] dehydratase</fullName>
        <shortName evidence="1">(3R)-hydroxymyristoyl-ACP dehydrase</shortName>
    </alternativeName>
    <alternativeName>
        <fullName evidence="1">Beta-hydroxyacyl-ACP dehydratase</fullName>
    </alternativeName>
</protein>